<name>RS3_ALKEH</name>
<sequence>MGHKVHPTGFRLGVTEDWRSMWYAGSSNFGEYLNTDLQVRNFIRKKLAHASVSRIRIERPAKNALVTIHTARPGIVIGKKGEDIDRLRGEVARLMGVPVHINIEEIRKPELDAKLVAESVAQQLERRIMFRRAMKRAVGNAMRLGAQGIKVHVSGRLNGAEIARSEWYREGRVPLHTLRANIDYGVAEAHTTYGVIGVKVWVFKGEIIDSDAQPAAGGEGARQGKG</sequence>
<proteinExistence type="inferred from homology"/>
<feature type="chain" id="PRO_0000293747" description="Small ribosomal subunit protein uS3">
    <location>
        <begin position="1"/>
        <end position="226"/>
    </location>
</feature>
<feature type="domain" description="KH type-2" evidence="1">
    <location>
        <begin position="39"/>
        <end position="107"/>
    </location>
</feature>
<protein>
    <recommendedName>
        <fullName evidence="1">Small ribosomal subunit protein uS3</fullName>
    </recommendedName>
    <alternativeName>
        <fullName evidence="2">30S ribosomal protein S3</fullName>
    </alternativeName>
</protein>
<accession>Q0ABG9</accession>
<organism>
    <name type="scientific">Alkalilimnicola ehrlichii (strain ATCC BAA-1101 / DSM 17681 / MLHE-1)</name>
    <dbReference type="NCBI Taxonomy" id="187272"/>
    <lineage>
        <taxon>Bacteria</taxon>
        <taxon>Pseudomonadati</taxon>
        <taxon>Pseudomonadota</taxon>
        <taxon>Gammaproteobacteria</taxon>
        <taxon>Chromatiales</taxon>
        <taxon>Ectothiorhodospiraceae</taxon>
        <taxon>Alkalilimnicola</taxon>
    </lineage>
</organism>
<keyword id="KW-1185">Reference proteome</keyword>
<keyword id="KW-0687">Ribonucleoprotein</keyword>
<keyword id="KW-0689">Ribosomal protein</keyword>
<keyword id="KW-0694">RNA-binding</keyword>
<keyword id="KW-0699">rRNA-binding</keyword>
<dbReference type="EMBL" id="CP000453">
    <property type="protein sequence ID" value="ABI55818.1"/>
    <property type="molecule type" value="Genomic_DNA"/>
</dbReference>
<dbReference type="RefSeq" id="WP_011628213.1">
    <property type="nucleotide sequence ID" value="NC_008340.1"/>
</dbReference>
<dbReference type="SMR" id="Q0ABG9"/>
<dbReference type="KEGG" id="aeh:Mlg_0464"/>
<dbReference type="eggNOG" id="COG0092">
    <property type="taxonomic scope" value="Bacteria"/>
</dbReference>
<dbReference type="HOGENOM" id="CLU_058591_0_2_6"/>
<dbReference type="OrthoDB" id="9806396at2"/>
<dbReference type="Proteomes" id="UP000001962">
    <property type="component" value="Chromosome"/>
</dbReference>
<dbReference type="GO" id="GO:0022627">
    <property type="term" value="C:cytosolic small ribosomal subunit"/>
    <property type="evidence" value="ECO:0007669"/>
    <property type="project" value="TreeGrafter"/>
</dbReference>
<dbReference type="GO" id="GO:0003729">
    <property type="term" value="F:mRNA binding"/>
    <property type="evidence" value="ECO:0007669"/>
    <property type="project" value="UniProtKB-UniRule"/>
</dbReference>
<dbReference type="GO" id="GO:0019843">
    <property type="term" value="F:rRNA binding"/>
    <property type="evidence" value="ECO:0007669"/>
    <property type="project" value="UniProtKB-UniRule"/>
</dbReference>
<dbReference type="GO" id="GO:0003735">
    <property type="term" value="F:structural constituent of ribosome"/>
    <property type="evidence" value="ECO:0007669"/>
    <property type="project" value="InterPro"/>
</dbReference>
<dbReference type="GO" id="GO:0006412">
    <property type="term" value="P:translation"/>
    <property type="evidence" value="ECO:0007669"/>
    <property type="project" value="UniProtKB-UniRule"/>
</dbReference>
<dbReference type="CDD" id="cd02412">
    <property type="entry name" value="KH-II_30S_S3"/>
    <property type="match status" value="1"/>
</dbReference>
<dbReference type="FunFam" id="3.30.1140.32:FF:000001">
    <property type="entry name" value="30S ribosomal protein S3"/>
    <property type="match status" value="1"/>
</dbReference>
<dbReference type="FunFam" id="3.30.300.20:FF:000001">
    <property type="entry name" value="30S ribosomal protein S3"/>
    <property type="match status" value="1"/>
</dbReference>
<dbReference type="Gene3D" id="3.30.300.20">
    <property type="match status" value="1"/>
</dbReference>
<dbReference type="Gene3D" id="3.30.1140.32">
    <property type="entry name" value="Ribosomal protein S3, C-terminal domain"/>
    <property type="match status" value="1"/>
</dbReference>
<dbReference type="HAMAP" id="MF_01309_B">
    <property type="entry name" value="Ribosomal_uS3_B"/>
    <property type="match status" value="1"/>
</dbReference>
<dbReference type="InterPro" id="IPR004087">
    <property type="entry name" value="KH_dom"/>
</dbReference>
<dbReference type="InterPro" id="IPR015946">
    <property type="entry name" value="KH_dom-like_a/b"/>
</dbReference>
<dbReference type="InterPro" id="IPR004044">
    <property type="entry name" value="KH_dom_type_2"/>
</dbReference>
<dbReference type="InterPro" id="IPR009019">
    <property type="entry name" value="KH_sf_prok-type"/>
</dbReference>
<dbReference type="InterPro" id="IPR036419">
    <property type="entry name" value="Ribosomal_S3_C_sf"/>
</dbReference>
<dbReference type="InterPro" id="IPR005704">
    <property type="entry name" value="Ribosomal_uS3_bac-typ"/>
</dbReference>
<dbReference type="InterPro" id="IPR001351">
    <property type="entry name" value="Ribosomal_uS3_C"/>
</dbReference>
<dbReference type="InterPro" id="IPR018280">
    <property type="entry name" value="Ribosomal_uS3_CS"/>
</dbReference>
<dbReference type="NCBIfam" id="TIGR01009">
    <property type="entry name" value="rpsC_bact"/>
    <property type="match status" value="1"/>
</dbReference>
<dbReference type="PANTHER" id="PTHR11760">
    <property type="entry name" value="30S/40S RIBOSOMAL PROTEIN S3"/>
    <property type="match status" value="1"/>
</dbReference>
<dbReference type="PANTHER" id="PTHR11760:SF19">
    <property type="entry name" value="SMALL RIBOSOMAL SUBUNIT PROTEIN US3C"/>
    <property type="match status" value="1"/>
</dbReference>
<dbReference type="Pfam" id="PF07650">
    <property type="entry name" value="KH_2"/>
    <property type="match status" value="1"/>
</dbReference>
<dbReference type="Pfam" id="PF00189">
    <property type="entry name" value="Ribosomal_S3_C"/>
    <property type="match status" value="1"/>
</dbReference>
<dbReference type="SMART" id="SM00322">
    <property type="entry name" value="KH"/>
    <property type="match status" value="1"/>
</dbReference>
<dbReference type="SUPFAM" id="SSF54814">
    <property type="entry name" value="Prokaryotic type KH domain (KH-domain type II)"/>
    <property type="match status" value="1"/>
</dbReference>
<dbReference type="SUPFAM" id="SSF54821">
    <property type="entry name" value="Ribosomal protein S3 C-terminal domain"/>
    <property type="match status" value="1"/>
</dbReference>
<dbReference type="PROSITE" id="PS50823">
    <property type="entry name" value="KH_TYPE_2"/>
    <property type="match status" value="1"/>
</dbReference>
<dbReference type="PROSITE" id="PS00548">
    <property type="entry name" value="RIBOSOMAL_S3"/>
    <property type="match status" value="1"/>
</dbReference>
<reference key="1">
    <citation type="submission" date="2006-08" db="EMBL/GenBank/DDBJ databases">
        <title>Complete sequence of Alkalilimnicola ehrilichei MLHE-1.</title>
        <authorList>
            <person name="Copeland A."/>
            <person name="Lucas S."/>
            <person name="Lapidus A."/>
            <person name="Barry K."/>
            <person name="Detter J.C."/>
            <person name="Glavina del Rio T."/>
            <person name="Hammon N."/>
            <person name="Israni S."/>
            <person name="Dalin E."/>
            <person name="Tice H."/>
            <person name="Pitluck S."/>
            <person name="Sims D."/>
            <person name="Brettin T."/>
            <person name="Bruce D."/>
            <person name="Han C."/>
            <person name="Tapia R."/>
            <person name="Gilna P."/>
            <person name="Schmutz J."/>
            <person name="Larimer F."/>
            <person name="Land M."/>
            <person name="Hauser L."/>
            <person name="Kyrpides N."/>
            <person name="Mikhailova N."/>
            <person name="Oremland R.S."/>
            <person name="Hoeft S.E."/>
            <person name="Switzer-Blum J."/>
            <person name="Kulp T."/>
            <person name="King G."/>
            <person name="Tabita R."/>
            <person name="Witte B."/>
            <person name="Santini J.M."/>
            <person name="Basu P."/>
            <person name="Hollibaugh J.T."/>
            <person name="Xie G."/>
            <person name="Stolz J.F."/>
            <person name="Richardson P."/>
        </authorList>
    </citation>
    <scope>NUCLEOTIDE SEQUENCE [LARGE SCALE GENOMIC DNA]</scope>
    <source>
        <strain>ATCC BAA-1101 / DSM 17681 / MLHE-1</strain>
    </source>
</reference>
<evidence type="ECO:0000255" key="1">
    <source>
        <dbReference type="HAMAP-Rule" id="MF_01309"/>
    </source>
</evidence>
<evidence type="ECO:0000305" key="2"/>
<comment type="function">
    <text evidence="1">Binds the lower part of the 30S subunit head. Binds mRNA in the 70S ribosome, positioning it for translation.</text>
</comment>
<comment type="subunit">
    <text evidence="1">Part of the 30S ribosomal subunit. Forms a tight complex with proteins S10 and S14.</text>
</comment>
<comment type="similarity">
    <text evidence="1">Belongs to the universal ribosomal protein uS3 family.</text>
</comment>
<gene>
    <name evidence="1" type="primary">rpsC</name>
    <name type="ordered locus">Mlg_0464</name>
</gene>